<proteinExistence type="evidence at transcript level"/>
<keyword id="KW-0106">Calcium</keyword>
<keyword id="KW-1015">Disulfide bond</keyword>
<keyword id="KW-0378">Hydrolase</keyword>
<keyword id="KW-0442">Lipid degradation</keyword>
<keyword id="KW-0443">Lipid metabolism</keyword>
<keyword id="KW-0479">Metal-binding</keyword>
<keyword id="KW-0964">Secreted</keyword>
<keyword id="KW-0732">Signal</keyword>
<keyword id="KW-0800">Toxin</keyword>
<comment type="function">
    <text evidence="1">PLA2 catalyzes the calcium-dependent hydrolysis of the 2-acyl groups in 3-sn-phosphoglycerides.</text>
</comment>
<comment type="catalytic activity">
    <reaction evidence="3 4">
        <text>a 1,2-diacyl-sn-glycero-3-phosphocholine + H2O = a 1-acyl-sn-glycero-3-phosphocholine + a fatty acid + H(+)</text>
        <dbReference type="Rhea" id="RHEA:15801"/>
        <dbReference type="ChEBI" id="CHEBI:15377"/>
        <dbReference type="ChEBI" id="CHEBI:15378"/>
        <dbReference type="ChEBI" id="CHEBI:28868"/>
        <dbReference type="ChEBI" id="CHEBI:57643"/>
        <dbReference type="ChEBI" id="CHEBI:58168"/>
        <dbReference type="EC" id="3.1.1.4"/>
    </reaction>
</comment>
<comment type="cofactor">
    <cofactor evidence="1">
        <name>Ca(2+)</name>
        <dbReference type="ChEBI" id="CHEBI:29108"/>
    </cofactor>
    <text evidence="1">Binds 1 Ca(2+) ion.</text>
</comment>
<comment type="subcellular location">
    <subcellularLocation>
        <location evidence="1">Secreted</location>
    </subcellularLocation>
</comment>
<comment type="tissue specificity">
    <text>Expressed by the venom gland.</text>
</comment>
<comment type="similarity">
    <text evidence="5">Belongs to the phospholipase A2 family. Group I subfamily. D49 sub-subfamily.</text>
</comment>
<evidence type="ECO:0000250" key="1"/>
<evidence type="ECO:0000255" key="2"/>
<evidence type="ECO:0000255" key="3">
    <source>
        <dbReference type="PROSITE-ProRule" id="PRU10035"/>
    </source>
</evidence>
<evidence type="ECO:0000255" key="4">
    <source>
        <dbReference type="PROSITE-ProRule" id="PRU10036"/>
    </source>
</evidence>
<evidence type="ECO:0000305" key="5"/>
<sequence length="146" mass="16175">MNPAHLLILAAVCVSPLGASSNRPMPLNLYQFKNMVQCTVPNRSWWHFADYGCYCGRGGSGTPVDDLDRCCQIHDNCYNEAEKISRCWPYFKTYSYECSQGTLTCKGGNNACAAAVCDCDRLAAICFAGAPYNDNNYNIDLKARCQ</sequence>
<name>PA2NB_NAJSP</name>
<feature type="signal peptide" evidence="2">
    <location>
        <begin position="1"/>
        <end position="21"/>
    </location>
</feature>
<feature type="propeptide" id="PRO_0000022932" evidence="1">
    <location>
        <begin position="22"/>
        <end position="27"/>
    </location>
</feature>
<feature type="chain" id="PRO_0000022933" description="Neutral phospholipase A2 B">
    <location>
        <begin position="28"/>
        <end position="146"/>
    </location>
</feature>
<feature type="active site" evidence="1">
    <location>
        <position position="74"/>
    </location>
</feature>
<feature type="active site" evidence="1">
    <location>
        <position position="120"/>
    </location>
</feature>
<feature type="binding site" evidence="1">
    <location>
        <position position="54"/>
    </location>
    <ligand>
        <name>Ca(2+)</name>
        <dbReference type="ChEBI" id="CHEBI:29108"/>
    </ligand>
</feature>
<feature type="binding site" evidence="1">
    <location>
        <position position="56"/>
    </location>
    <ligand>
        <name>Ca(2+)</name>
        <dbReference type="ChEBI" id="CHEBI:29108"/>
    </ligand>
</feature>
<feature type="binding site" evidence="1">
    <location>
        <position position="58"/>
    </location>
    <ligand>
        <name>Ca(2+)</name>
        <dbReference type="ChEBI" id="CHEBI:29108"/>
    </ligand>
</feature>
<feature type="binding site" evidence="1">
    <location>
        <position position="75"/>
    </location>
    <ligand>
        <name>Ca(2+)</name>
        <dbReference type="ChEBI" id="CHEBI:29108"/>
    </ligand>
</feature>
<feature type="disulfide bond" evidence="1">
    <location>
        <begin position="38"/>
        <end position="98"/>
    </location>
</feature>
<feature type="disulfide bond" evidence="1">
    <location>
        <begin position="53"/>
        <end position="145"/>
    </location>
</feature>
<feature type="disulfide bond" evidence="1">
    <location>
        <begin position="55"/>
        <end position="71"/>
    </location>
</feature>
<feature type="disulfide bond" evidence="1">
    <location>
        <begin position="70"/>
        <end position="126"/>
    </location>
</feature>
<feature type="disulfide bond" evidence="1">
    <location>
        <begin position="77"/>
        <end position="119"/>
    </location>
</feature>
<feature type="disulfide bond" evidence="1">
    <location>
        <begin position="87"/>
        <end position="112"/>
    </location>
</feature>
<feature type="disulfide bond" evidence="1">
    <location>
        <begin position="105"/>
        <end position="117"/>
    </location>
</feature>
<reference key="1">
    <citation type="journal article" date="1997" name="Toxicon">
        <title>Cloning and characterization of cDNAs encoding three isoforms of phospholipase A2 in Malayan spitting cobra (Naja naja sputatrix) venom.</title>
        <authorList>
            <person name="Armugam A."/>
            <person name="Earnest L."/>
            <person name="Chung M.C.M."/>
            <person name="Gopalakrishnakone P."/>
            <person name="Tan C.H."/>
            <person name="Tan N.-H."/>
            <person name="Jeyaseelan K."/>
        </authorList>
    </citation>
    <scope>NUCLEOTIDE SEQUENCE [MRNA]</scope>
    <source>
        <tissue>Venom gland</tissue>
    </source>
</reference>
<organism>
    <name type="scientific">Naja sputatrix</name>
    <name type="common">Malayan spitting cobra</name>
    <name type="synonym">Naja naja sputatrix</name>
    <dbReference type="NCBI Taxonomy" id="33626"/>
    <lineage>
        <taxon>Eukaryota</taxon>
        <taxon>Metazoa</taxon>
        <taxon>Chordata</taxon>
        <taxon>Craniata</taxon>
        <taxon>Vertebrata</taxon>
        <taxon>Euteleostomi</taxon>
        <taxon>Lepidosauria</taxon>
        <taxon>Squamata</taxon>
        <taxon>Bifurcata</taxon>
        <taxon>Unidentata</taxon>
        <taxon>Episquamata</taxon>
        <taxon>Toxicofera</taxon>
        <taxon>Serpentes</taxon>
        <taxon>Colubroidea</taxon>
        <taxon>Elapidae</taxon>
        <taxon>Elapinae</taxon>
        <taxon>Naja</taxon>
    </lineage>
</organism>
<dbReference type="EC" id="3.1.1.4"/>
<dbReference type="EMBL" id="L42005">
    <property type="protein sequence ID" value="AAA66028.1"/>
    <property type="molecule type" value="mRNA"/>
</dbReference>
<dbReference type="SMR" id="Q92085"/>
<dbReference type="GO" id="GO:0005576">
    <property type="term" value="C:extracellular region"/>
    <property type="evidence" value="ECO:0007669"/>
    <property type="project" value="UniProtKB-SubCell"/>
</dbReference>
<dbReference type="GO" id="GO:0005509">
    <property type="term" value="F:calcium ion binding"/>
    <property type="evidence" value="ECO:0007669"/>
    <property type="project" value="InterPro"/>
</dbReference>
<dbReference type="GO" id="GO:0047498">
    <property type="term" value="F:calcium-dependent phospholipase A2 activity"/>
    <property type="evidence" value="ECO:0007669"/>
    <property type="project" value="TreeGrafter"/>
</dbReference>
<dbReference type="GO" id="GO:0005543">
    <property type="term" value="F:phospholipid binding"/>
    <property type="evidence" value="ECO:0007669"/>
    <property type="project" value="TreeGrafter"/>
</dbReference>
<dbReference type="GO" id="GO:0005102">
    <property type="term" value="F:signaling receptor binding"/>
    <property type="evidence" value="ECO:0007669"/>
    <property type="project" value="TreeGrafter"/>
</dbReference>
<dbReference type="GO" id="GO:0090729">
    <property type="term" value="F:toxin activity"/>
    <property type="evidence" value="ECO:0007669"/>
    <property type="project" value="UniProtKB-KW"/>
</dbReference>
<dbReference type="GO" id="GO:0050482">
    <property type="term" value="P:arachidonate secretion"/>
    <property type="evidence" value="ECO:0007669"/>
    <property type="project" value="InterPro"/>
</dbReference>
<dbReference type="GO" id="GO:0006633">
    <property type="term" value="P:fatty acid biosynthetic process"/>
    <property type="evidence" value="ECO:0007669"/>
    <property type="project" value="TreeGrafter"/>
</dbReference>
<dbReference type="GO" id="GO:0016042">
    <property type="term" value="P:lipid catabolic process"/>
    <property type="evidence" value="ECO:0007669"/>
    <property type="project" value="UniProtKB-KW"/>
</dbReference>
<dbReference type="GO" id="GO:0006644">
    <property type="term" value="P:phospholipid metabolic process"/>
    <property type="evidence" value="ECO:0007669"/>
    <property type="project" value="InterPro"/>
</dbReference>
<dbReference type="GO" id="GO:0048146">
    <property type="term" value="P:positive regulation of fibroblast proliferation"/>
    <property type="evidence" value="ECO:0007669"/>
    <property type="project" value="TreeGrafter"/>
</dbReference>
<dbReference type="CDD" id="cd00125">
    <property type="entry name" value="PLA2c"/>
    <property type="match status" value="1"/>
</dbReference>
<dbReference type="FunFam" id="1.20.90.10:FF:000007">
    <property type="entry name" value="Acidic phospholipase A2"/>
    <property type="match status" value="1"/>
</dbReference>
<dbReference type="Gene3D" id="1.20.90.10">
    <property type="entry name" value="Phospholipase A2 domain"/>
    <property type="match status" value="1"/>
</dbReference>
<dbReference type="InterPro" id="IPR001211">
    <property type="entry name" value="PLipase_A2"/>
</dbReference>
<dbReference type="InterPro" id="IPR033112">
    <property type="entry name" value="PLipase_A2_Asp_AS"/>
</dbReference>
<dbReference type="InterPro" id="IPR016090">
    <property type="entry name" value="PLipase_A2_dom"/>
</dbReference>
<dbReference type="InterPro" id="IPR036444">
    <property type="entry name" value="PLipase_A2_dom_sf"/>
</dbReference>
<dbReference type="InterPro" id="IPR033113">
    <property type="entry name" value="PLipase_A2_His_AS"/>
</dbReference>
<dbReference type="PANTHER" id="PTHR11716:SF94">
    <property type="entry name" value="PHOSPHOLIPASE A2"/>
    <property type="match status" value="1"/>
</dbReference>
<dbReference type="PANTHER" id="PTHR11716">
    <property type="entry name" value="PHOSPHOLIPASE A2 FAMILY MEMBER"/>
    <property type="match status" value="1"/>
</dbReference>
<dbReference type="Pfam" id="PF00068">
    <property type="entry name" value="Phospholip_A2_1"/>
    <property type="match status" value="1"/>
</dbReference>
<dbReference type="PRINTS" id="PR00389">
    <property type="entry name" value="PHPHLIPASEA2"/>
</dbReference>
<dbReference type="SMART" id="SM00085">
    <property type="entry name" value="PA2c"/>
    <property type="match status" value="1"/>
</dbReference>
<dbReference type="SUPFAM" id="SSF48619">
    <property type="entry name" value="Phospholipase A2, PLA2"/>
    <property type="match status" value="1"/>
</dbReference>
<dbReference type="PROSITE" id="PS00119">
    <property type="entry name" value="PA2_ASP"/>
    <property type="match status" value="1"/>
</dbReference>
<dbReference type="PROSITE" id="PS00118">
    <property type="entry name" value="PA2_HIS"/>
    <property type="match status" value="1"/>
</dbReference>
<accession>Q92085</accession>
<protein>
    <recommendedName>
        <fullName>Neutral phospholipase A2 B</fullName>
        <shortName>svPLA2</shortName>
        <ecNumber>3.1.1.4</ecNumber>
    </recommendedName>
    <alternativeName>
        <fullName>NAJPLA-2B</fullName>
        <shortName>NPLA</shortName>
    </alternativeName>
    <alternativeName>
        <fullName>Phosphatidylcholine 2-acylhydrolase</fullName>
    </alternativeName>
</protein>